<feature type="chain" id="PRO_0000215866" description="Probable cysteine protease ATG4">
    <location>
        <begin position="1"/>
        <end position="533"/>
    </location>
</feature>
<feature type="active site" description="Nucleophile" evidence="2">
    <location>
        <position position="118"/>
    </location>
</feature>
<comment type="function">
    <text evidence="1">Cysteine protease that plays a key role in cytoplasm to vacuole transport (Cvt) and autophagy by mediating both proteolytic activation and delipidation of ATG8. Required for selective autophagic degradation of the nucleus (nucleophagy) as well as for mitophagy which contributes to regulate mitochondrial quantity and quality by eliminating the mitochondria to a basal level to fulfill cellular energy requirements and preventing excess ROS production. The protease activity is required for proteolytic activation of ATG8: cleaves the C-terminal amino acid of ATG8 to reveal a C-terminal glycine. ATG8 ubiquitin-like activity requires the exposure of the glycine at the C-terminus for its conjugation to phosphatidylethanolamine (PE) and its insertion to membranes, which is necessary for autophagy. The ATG8-PE conjugate mediates tethering between adjacent membranes and stimulates membrane hemifusion, leading to expansion of the autophagosomal membrane during autophagy. In addition to the protease activity, also catalyzes deconjugation of PE-conjugated forms of ATG8 during macroautophagy: ATG8 delipidation is required to release the protein from membranes, which facilitates multiple events during macroautophagy, and especially for efficient autophagosome biogenesis, the assembly of ATG9-containing tubulovesicular clusters into phagophores/autophagosomes, and for the disassembly of PAS-associated ATG components. ATG8 delipidation by ATG4 also recycles ATG8-PE generated on inappropriate membranes to maintain a reservoir of unlipidated ATG8 that is required for autophagosome formation at the PAS.</text>
</comment>
<comment type="catalytic activity">
    <reaction evidence="1">
        <text>[protein]-C-terminal L-amino acid-glycyl-phosphatidylethanolamide + H2O = [protein]-C-terminal L-amino acid-glycine + a 1,2-diacyl-sn-glycero-3-phosphoethanolamine</text>
        <dbReference type="Rhea" id="RHEA:67548"/>
        <dbReference type="Rhea" id="RHEA-COMP:17323"/>
        <dbReference type="Rhea" id="RHEA-COMP:17324"/>
        <dbReference type="ChEBI" id="CHEBI:15377"/>
        <dbReference type="ChEBI" id="CHEBI:64612"/>
        <dbReference type="ChEBI" id="CHEBI:172940"/>
        <dbReference type="ChEBI" id="CHEBI:172941"/>
    </reaction>
    <physiologicalReaction direction="left-to-right" evidence="1">
        <dbReference type="Rhea" id="RHEA:67549"/>
    </physiologicalReaction>
</comment>
<comment type="subcellular location">
    <subcellularLocation>
        <location evidence="1">Cytoplasm</location>
    </subcellularLocation>
    <subcellularLocation>
        <location evidence="1">Nucleus</location>
    </subcellularLocation>
    <subcellularLocation>
        <location evidence="1">Preautophagosomal structure</location>
    </subcellularLocation>
</comment>
<comment type="similarity">
    <text evidence="3">Belongs to the peptidase C54 family.</text>
</comment>
<organism>
    <name type="scientific">Komagataella pastoris</name>
    <name type="common">Yeast</name>
    <name type="synonym">Pichia pastoris</name>
    <dbReference type="NCBI Taxonomy" id="4922"/>
    <lineage>
        <taxon>Eukaryota</taxon>
        <taxon>Fungi</taxon>
        <taxon>Dikarya</taxon>
        <taxon>Ascomycota</taxon>
        <taxon>Saccharomycotina</taxon>
        <taxon>Pichiomycetes</taxon>
        <taxon>Pichiales</taxon>
        <taxon>Pichiaceae</taxon>
        <taxon>Komagataella</taxon>
    </lineage>
</organism>
<proteinExistence type="inferred from homology"/>
<reference key="1">
    <citation type="journal article" date="2002" name="Genes Cells">
        <title>Paz2 and 13 other PAZ gene products regulate vacuolar engulfment of peroxisomes during micropexophagy.</title>
        <authorList>
            <person name="Mukaiyama H."/>
            <person name="Oku M."/>
            <person name="Baba M."/>
            <person name="Samizo T."/>
            <person name="Hammond A.T."/>
            <person name="Glick B.S."/>
            <person name="Kato N."/>
            <person name="Sakai Y."/>
        </authorList>
    </citation>
    <scope>NUCLEOTIDE SEQUENCE [GENOMIC DNA]</scope>
</reference>
<reference key="2">
    <citation type="journal article" date="2003" name="Dev. Cell">
        <title>A unified nomenclature for yeast autophagy-related genes.</title>
        <authorList>
            <person name="Klionsky D.J."/>
            <person name="Cregg J.M."/>
            <person name="Dunn W.A. Jr."/>
            <person name="Emr S.D."/>
            <person name="Sakai Y."/>
            <person name="Sandoval I.V."/>
            <person name="Sibirny A."/>
            <person name="Subramani S."/>
            <person name="Thumm M."/>
            <person name="Veenhuis M."/>
            <person name="Ohsumi Y."/>
        </authorList>
    </citation>
    <scope>NOMENCLATURE</scope>
</reference>
<name>ATG4_PICPA</name>
<sequence>MYRFLGLGTHPNDDQNKIHVLGRQYDPIKTQETEGKDLDLNSRFQQVLDSIKDGNKKSTTYSQSFIDDVYSKIWLTYRAGFPPIARDKDSPTFTLGALLRGQFDFNEIGFTSDAGWGCMIRTSQSLLANALLFLHLGRDWVFKAKDPANVEHDRIISWFVDIPDEPFSIHNFVQQGIKCCDKKPGEWFGPSAASRAIKNLCKEYPPCGLRVYFSSDCGDVYDTEVRELAYGDSDTFTPILVLLGIRLGVEKVNLYIGDLLRECLSLKQSVGISGRKTSFLALLSIGFQGDYLFYLIPTFPKKALTFGKHGEPVHRLQTKKTDENAAGQYPVFKYWIQIMKQTMMTAMKASKTTASTLKFFRVLMSNQSTHQKVTKLHLSHMDPSMLIGFLITSEDDFNDWKENIGKKDPSHKIVHITETKVSESTSNFQFNSLRSNSIADYDNCSGEDCDSAAIASDSDDFVDLAADFAVTGLEPRTHTGVDDETSSDYVQHFPIRRFSQPVIVSREDVVPTLSEDNGVIALDDKMSGISVGR</sequence>
<protein>
    <recommendedName>
        <fullName>Probable cysteine protease ATG4</fullName>
        <ecNumber>3.4.22.-</ecNumber>
    </recommendedName>
    <alternativeName>
        <fullName>Autophagy-related protein 4</fullName>
    </alternativeName>
    <alternativeName>
        <fullName>Pexophagy zeocin-resistant mutant protein 8</fullName>
    </alternativeName>
</protein>
<evidence type="ECO:0000250" key="1">
    <source>
        <dbReference type="UniProtKB" id="P53867"/>
    </source>
</evidence>
<evidence type="ECO:0000250" key="2">
    <source>
        <dbReference type="UniProtKB" id="Q9Y4P1"/>
    </source>
</evidence>
<evidence type="ECO:0000305" key="3"/>
<dbReference type="EC" id="3.4.22.-"/>
<dbReference type="EMBL" id="AY058220">
    <property type="protein sequence ID" value="AAL25849.1"/>
    <property type="molecule type" value="Genomic_DNA"/>
</dbReference>
<dbReference type="SMR" id="Q8NJJ3"/>
<dbReference type="GO" id="GO:0005634">
    <property type="term" value="C:nucleus"/>
    <property type="evidence" value="ECO:0007669"/>
    <property type="project" value="UniProtKB-SubCell"/>
</dbReference>
<dbReference type="GO" id="GO:0000407">
    <property type="term" value="C:phagophore assembly site"/>
    <property type="evidence" value="ECO:0007669"/>
    <property type="project" value="UniProtKB-SubCell"/>
</dbReference>
<dbReference type="GO" id="GO:0004197">
    <property type="term" value="F:cysteine-type endopeptidase activity"/>
    <property type="evidence" value="ECO:0007669"/>
    <property type="project" value="TreeGrafter"/>
</dbReference>
<dbReference type="GO" id="GO:0019786">
    <property type="term" value="F:protein-phosphatidylethanolamide deconjugating activity"/>
    <property type="evidence" value="ECO:0007669"/>
    <property type="project" value="InterPro"/>
</dbReference>
<dbReference type="GO" id="GO:0035973">
    <property type="term" value="P:aggrephagy"/>
    <property type="evidence" value="ECO:0007669"/>
    <property type="project" value="TreeGrafter"/>
</dbReference>
<dbReference type="GO" id="GO:0000045">
    <property type="term" value="P:autophagosome assembly"/>
    <property type="evidence" value="ECO:0007669"/>
    <property type="project" value="TreeGrafter"/>
</dbReference>
<dbReference type="GO" id="GO:0000423">
    <property type="term" value="P:mitophagy"/>
    <property type="evidence" value="ECO:0007669"/>
    <property type="project" value="TreeGrafter"/>
</dbReference>
<dbReference type="GO" id="GO:0034727">
    <property type="term" value="P:piecemeal microautophagy of the nucleus"/>
    <property type="evidence" value="ECO:0007669"/>
    <property type="project" value="TreeGrafter"/>
</dbReference>
<dbReference type="GO" id="GO:0016485">
    <property type="term" value="P:protein processing"/>
    <property type="evidence" value="ECO:0007669"/>
    <property type="project" value="TreeGrafter"/>
</dbReference>
<dbReference type="GO" id="GO:0015031">
    <property type="term" value="P:protein transport"/>
    <property type="evidence" value="ECO:0007669"/>
    <property type="project" value="UniProtKB-KW"/>
</dbReference>
<dbReference type="InterPro" id="IPR038765">
    <property type="entry name" value="Papain-like_cys_pep_sf"/>
</dbReference>
<dbReference type="InterPro" id="IPR005078">
    <property type="entry name" value="Peptidase_C54"/>
</dbReference>
<dbReference type="InterPro" id="IPR046792">
    <property type="entry name" value="Peptidase_C54_cat"/>
</dbReference>
<dbReference type="PANTHER" id="PTHR22624:SF49">
    <property type="entry name" value="CYSTEINE PROTEASE"/>
    <property type="match status" value="1"/>
</dbReference>
<dbReference type="PANTHER" id="PTHR22624">
    <property type="entry name" value="CYSTEINE PROTEASE ATG4"/>
    <property type="match status" value="1"/>
</dbReference>
<dbReference type="Pfam" id="PF03416">
    <property type="entry name" value="Peptidase_C54"/>
    <property type="match status" value="1"/>
</dbReference>
<dbReference type="SUPFAM" id="SSF54001">
    <property type="entry name" value="Cysteine proteinases"/>
    <property type="match status" value="1"/>
</dbReference>
<accession>Q8NJJ3</accession>
<keyword id="KW-0072">Autophagy</keyword>
<keyword id="KW-0963">Cytoplasm</keyword>
<keyword id="KW-0378">Hydrolase</keyword>
<keyword id="KW-0539">Nucleus</keyword>
<keyword id="KW-0645">Protease</keyword>
<keyword id="KW-0653">Protein transport</keyword>
<keyword id="KW-0788">Thiol protease</keyword>
<keyword id="KW-0813">Transport</keyword>
<gene>
    <name type="primary">ATG4</name>
    <name type="synonym">PAZ8</name>
</gene>